<comment type="function">
    <text evidence="1">Catalyzes the sequential NAD-dependent oxidations of L-histidinol to L-histidinaldehyde and then to L-histidine.</text>
</comment>
<comment type="catalytic activity">
    <reaction evidence="1">
        <text>L-histidinol + 2 NAD(+) + H2O = L-histidine + 2 NADH + 3 H(+)</text>
        <dbReference type="Rhea" id="RHEA:20641"/>
        <dbReference type="ChEBI" id="CHEBI:15377"/>
        <dbReference type="ChEBI" id="CHEBI:15378"/>
        <dbReference type="ChEBI" id="CHEBI:57540"/>
        <dbReference type="ChEBI" id="CHEBI:57595"/>
        <dbReference type="ChEBI" id="CHEBI:57699"/>
        <dbReference type="ChEBI" id="CHEBI:57945"/>
        <dbReference type="EC" id="1.1.1.23"/>
    </reaction>
</comment>
<comment type="cofactor">
    <cofactor evidence="1">
        <name>Zn(2+)</name>
        <dbReference type="ChEBI" id="CHEBI:29105"/>
    </cofactor>
    <text evidence="1">Binds 1 zinc ion per subunit.</text>
</comment>
<comment type="pathway">
    <text evidence="1">Amino-acid biosynthesis; L-histidine biosynthesis; L-histidine from 5-phospho-alpha-D-ribose 1-diphosphate: step 9/9.</text>
</comment>
<comment type="similarity">
    <text evidence="1">Belongs to the histidinol dehydrogenase family.</text>
</comment>
<gene>
    <name evidence="1" type="primary">hisD</name>
    <name type="ordered locus">jk0786</name>
</gene>
<keyword id="KW-0028">Amino-acid biosynthesis</keyword>
<keyword id="KW-0368">Histidine biosynthesis</keyword>
<keyword id="KW-0479">Metal-binding</keyword>
<keyword id="KW-0520">NAD</keyword>
<keyword id="KW-0560">Oxidoreductase</keyword>
<keyword id="KW-1185">Reference proteome</keyword>
<keyword id="KW-0862">Zinc</keyword>
<organism>
    <name type="scientific">Corynebacterium jeikeium (strain K411)</name>
    <dbReference type="NCBI Taxonomy" id="306537"/>
    <lineage>
        <taxon>Bacteria</taxon>
        <taxon>Bacillati</taxon>
        <taxon>Actinomycetota</taxon>
        <taxon>Actinomycetes</taxon>
        <taxon>Mycobacteriales</taxon>
        <taxon>Corynebacteriaceae</taxon>
        <taxon>Corynebacterium</taxon>
    </lineage>
</organism>
<feature type="chain" id="PRO_0000135762" description="Histidinol dehydrogenase">
    <location>
        <begin position="1"/>
        <end position="450"/>
    </location>
</feature>
<feature type="active site" description="Proton acceptor" evidence="1">
    <location>
        <position position="339"/>
    </location>
</feature>
<feature type="active site" description="Proton acceptor" evidence="1">
    <location>
        <position position="340"/>
    </location>
</feature>
<feature type="binding site" evidence="1">
    <location>
        <position position="135"/>
    </location>
    <ligand>
        <name>NAD(+)</name>
        <dbReference type="ChEBI" id="CHEBI:57540"/>
    </ligand>
</feature>
<feature type="binding site" evidence="1">
    <location>
        <position position="197"/>
    </location>
    <ligand>
        <name>NAD(+)</name>
        <dbReference type="ChEBI" id="CHEBI:57540"/>
    </ligand>
</feature>
<feature type="binding site" evidence="1">
    <location>
        <position position="225"/>
    </location>
    <ligand>
        <name>NAD(+)</name>
        <dbReference type="ChEBI" id="CHEBI:57540"/>
    </ligand>
</feature>
<feature type="binding site" evidence="1">
    <location>
        <position position="248"/>
    </location>
    <ligand>
        <name>substrate</name>
    </ligand>
</feature>
<feature type="binding site" evidence="1">
    <location>
        <position position="270"/>
    </location>
    <ligand>
        <name>substrate</name>
    </ligand>
</feature>
<feature type="binding site" evidence="1">
    <location>
        <position position="270"/>
    </location>
    <ligand>
        <name>Zn(2+)</name>
        <dbReference type="ChEBI" id="CHEBI:29105"/>
    </ligand>
</feature>
<feature type="binding site" evidence="1">
    <location>
        <position position="273"/>
    </location>
    <ligand>
        <name>substrate</name>
    </ligand>
</feature>
<feature type="binding site" evidence="1">
    <location>
        <position position="273"/>
    </location>
    <ligand>
        <name>Zn(2+)</name>
        <dbReference type="ChEBI" id="CHEBI:29105"/>
    </ligand>
</feature>
<feature type="binding site" evidence="1">
    <location>
        <position position="340"/>
    </location>
    <ligand>
        <name>substrate</name>
    </ligand>
</feature>
<feature type="binding site" evidence="1">
    <location>
        <position position="373"/>
    </location>
    <ligand>
        <name>substrate</name>
    </ligand>
</feature>
<feature type="binding site" evidence="1">
    <location>
        <position position="373"/>
    </location>
    <ligand>
        <name>Zn(2+)</name>
        <dbReference type="ChEBI" id="CHEBI:29105"/>
    </ligand>
</feature>
<feature type="binding site" evidence="1">
    <location>
        <position position="427"/>
    </location>
    <ligand>
        <name>substrate</name>
    </ligand>
</feature>
<feature type="binding site" evidence="1">
    <location>
        <position position="432"/>
    </location>
    <ligand>
        <name>substrate</name>
    </ligand>
</feature>
<feature type="binding site" evidence="1">
    <location>
        <position position="432"/>
    </location>
    <ligand>
        <name>Zn(2+)</name>
        <dbReference type="ChEBI" id="CHEBI:29105"/>
    </ligand>
</feature>
<name>HISX_CORJK</name>
<proteinExistence type="inferred from homology"/>
<protein>
    <recommendedName>
        <fullName evidence="1">Histidinol dehydrogenase</fullName>
        <shortName evidence="1">HDH</shortName>
        <ecNumber evidence="1">1.1.1.23</ecNumber>
    </recommendedName>
</protein>
<dbReference type="EC" id="1.1.1.23" evidence="1"/>
<dbReference type="EMBL" id="CR931997">
    <property type="protein sequence ID" value="CAI36948.1"/>
    <property type="molecule type" value="Genomic_DNA"/>
</dbReference>
<dbReference type="RefSeq" id="WP_011273391.1">
    <property type="nucleotide sequence ID" value="NC_007164.1"/>
</dbReference>
<dbReference type="SMR" id="Q4JW59"/>
<dbReference type="STRING" id="306537.jk0786"/>
<dbReference type="KEGG" id="cjk:jk0786"/>
<dbReference type="PATRIC" id="fig|306537.10.peg.795"/>
<dbReference type="eggNOG" id="COG0141">
    <property type="taxonomic scope" value="Bacteria"/>
</dbReference>
<dbReference type="HOGENOM" id="CLU_006732_3_1_11"/>
<dbReference type="OrthoDB" id="9805269at2"/>
<dbReference type="UniPathway" id="UPA00031">
    <property type="reaction ID" value="UER00014"/>
</dbReference>
<dbReference type="Proteomes" id="UP000000545">
    <property type="component" value="Chromosome"/>
</dbReference>
<dbReference type="GO" id="GO:0005829">
    <property type="term" value="C:cytosol"/>
    <property type="evidence" value="ECO:0007669"/>
    <property type="project" value="TreeGrafter"/>
</dbReference>
<dbReference type="GO" id="GO:0004399">
    <property type="term" value="F:histidinol dehydrogenase activity"/>
    <property type="evidence" value="ECO:0007669"/>
    <property type="project" value="UniProtKB-UniRule"/>
</dbReference>
<dbReference type="GO" id="GO:0051287">
    <property type="term" value="F:NAD binding"/>
    <property type="evidence" value="ECO:0007669"/>
    <property type="project" value="InterPro"/>
</dbReference>
<dbReference type="GO" id="GO:0008270">
    <property type="term" value="F:zinc ion binding"/>
    <property type="evidence" value="ECO:0007669"/>
    <property type="project" value="UniProtKB-UniRule"/>
</dbReference>
<dbReference type="GO" id="GO:0000105">
    <property type="term" value="P:L-histidine biosynthetic process"/>
    <property type="evidence" value="ECO:0007669"/>
    <property type="project" value="UniProtKB-UniRule"/>
</dbReference>
<dbReference type="CDD" id="cd06572">
    <property type="entry name" value="Histidinol_dh"/>
    <property type="match status" value="1"/>
</dbReference>
<dbReference type="FunFam" id="3.40.50.1980:FF:000001">
    <property type="entry name" value="Histidinol dehydrogenase"/>
    <property type="match status" value="1"/>
</dbReference>
<dbReference type="Gene3D" id="1.20.5.1300">
    <property type="match status" value="1"/>
</dbReference>
<dbReference type="Gene3D" id="3.40.50.1980">
    <property type="entry name" value="Nitrogenase molybdenum iron protein domain"/>
    <property type="match status" value="2"/>
</dbReference>
<dbReference type="HAMAP" id="MF_01024">
    <property type="entry name" value="HisD"/>
    <property type="match status" value="1"/>
</dbReference>
<dbReference type="InterPro" id="IPR016161">
    <property type="entry name" value="Ald_DH/histidinol_DH"/>
</dbReference>
<dbReference type="InterPro" id="IPR001692">
    <property type="entry name" value="Histidinol_DH_CS"/>
</dbReference>
<dbReference type="InterPro" id="IPR022695">
    <property type="entry name" value="Histidinol_DH_monofunct"/>
</dbReference>
<dbReference type="InterPro" id="IPR012131">
    <property type="entry name" value="Hstdl_DH"/>
</dbReference>
<dbReference type="NCBIfam" id="TIGR00069">
    <property type="entry name" value="hisD"/>
    <property type="match status" value="1"/>
</dbReference>
<dbReference type="PANTHER" id="PTHR21256:SF2">
    <property type="entry name" value="HISTIDINE BIOSYNTHESIS TRIFUNCTIONAL PROTEIN"/>
    <property type="match status" value="1"/>
</dbReference>
<dbReference type="PANTHER" id="PTHR21256">
    <property type="entry name" value="HISTIDINOL DEHYDROGENASE HDH"/>
    <property type="match status" value="1"/>
</dbReference>
<dbReference type="Pfam" id="PF00815">
    <property type="entry name" value="Histidinol_dh"/>
    <property type="match status" value="1"/>
</dbReference>
<dbReference type="PIRSF" id="PIRSF000099">
    <property type="entry name" value="Histidinol_dh"/>
    <property type="match status" value="1"/>
</dbReference>
<dbReference type="PRINTS" id="PR00083">
    <property type="entry name" value="HOLDHDRGNASE"/>
</dbReference>
<dbReference type="SUPFAM" id="SSF53720">
    <property type="entry name" value="ALDH-like"/>
    <property type="match status" value="1"/>
</dbReference>
<dbReference type="PROSITE" id="PS00611">
    <property type="entry name" value="HISOL_DEHYDROGENASE"/>
    <property type="match status" value="1"/>
</dbReference>
<reference key="1">
    <citation type="journal article" date="2005" name="J. Bacteriol.">
        <title>Complete genome sequence and analysis of the multiresistant nosocomial pathogen Corynebacterium jeikeium K411, a lipid-requiring bacterium of the human skin flora.</title>
        <authorList>
            <person name="Tauch A."/>
            <person name="Kaiser O."/>
            <person name="Hain T."/>
            <person name="Goesmann A."/>
            <person name="Weisshaar B."/>
            <person name="Albersmeier A."/>
            <person name="Bekel T."/>
            <person name="Bischoff N."/>
            <person name="Brune I."/>
            <person name="Chakraborty T."/>
            <person name="Kalinowski J."/>
            <person name="Meyer F."/>
            <person name="Rupp O."/>
            <person name="Schneiker S."/>
            <person name="Viehoever P."/>
            <person name="Puehler A."/>
        </authorList>
    </citation>
    <scope>NUCLEOTIDE SEQUENCE [LARGE SCALE GENOMIC DNA]</scope>
    <source>
        <strain>K411</strain>
    </source>
</reference>
<accession>Q4JW59</accession>
<sequence>MTSAQLDFSRIDLRGQAPTTAELRHRLPRGGTDVDSVIPTVAPIVDQVREGGARAALEIGQRFDGVTPDSVRVPAEVIDAAVGTLADDVIAALEEAIKRVRAFHSAIRPEDKQVEVAPGGIVTERFIPVQRVGLYAPGGNAVYPSSVIMNVVPAQEAGVESLVVASPPQEGGWPHPTVLAACKLLGVDEVWAVGGAQAVALLAHGSTAEGGEELEPVDMVTGPGNIFVTAAKRLCRSVVGIDSEAGPTEIAVLADESANAVEIAYDLISQAEHDTMAASVLITDSEKLADEVVAEMNERYHITENSERVAEALSGQQSGVVLVDDIAAGIRAANAYGAEHLEIHTEDAHGVAAQITNAGAIFIGRFSPVPLGDYAAGSNHVLPTSGTARHSSGLSTLTFLKSVHVIDYNEEGLRGVADTVITLSKSEGLPAHGEAISARTSTANTNGTEV</sequence>
<evidence type="ECO:0000255" key="1">
    <source>
        <dbReference type="HAMAP-Rule" id="MF_01024"/>
    </source>
</evidence>